<reference key="1">
    <citation type="journal article" date="1994" name="Gene">
        <title>Gene organization in the dnaA-gyrA region of the Streptomyces coelicolor chromosome.</title>
        <authorList>
            <person name="Calcutt M.J."/>
        </authorList>
    </citation>
    <scope>NUCLEOTIDE SEQUENCE [GENOMIC DNA]</scope>
    <source>
        <strain>A3(2) / NRRL B-16638</strain>
    </source>
</reference>
<reference key="2">
    <citation type="journal article" date="2002" name="Nature">
        <title>Complete genome sequence of the model actinomycete Streptomyces coelicolor A3(2).</title>
        <authorList>
            <person name="Bentley S.D."/>
            <person name="Chater K.F."/>
            <person name="Cerdeno-Tarraga A.-M."/>
            <person name="Challis G.L."/>
            <person name="Thomson N.R."/>
            <person name="James K.D."/>
            <person name="Harris D.E."/>
            <person name="Quail M.A."/>
            <person name="Kieser H."/>
            <person name="Harper D."/>
            <person name="Bateman A."/>
            <person name="Brown S."/>
            <person name="Chandra G."/>
            <person name="Chen C.W."/>
            <person name="Collins M."/>
            <person name="Cronin A."/>
            <person name="Fraser A."/>
            <person name="Goble A."/>
            <person name="Hidalgo J."/>
            <person name="Hornsby T."/>
            <person name="Howarth S."/>
            <person name="Huang C.-H."/>
            <person name="Kieser T."/>
            <person name="Larke L."/>
            <person name="Murphy L.D."/>
            <person name="Oliver K."/>
            <person name="O'Neil S."/>
            <person name="Rabbinowitsch E."/>
            <person name="Rajandream M.A."/>
            <person name="Rutherford K.M."/>
            <person name="Rutter S."/>
            <person name="Seeger K."/>
            <person name="Saunders D."/>
            <person name="Sharp S."/>
            <person name="Squares R."/>
            <person name="Squares S."/>
            <person name="Taylor K."/>
            <person name="Warren T."/>
            <person name="Wietzorrek A."/>
            <person name="Woodward J.R."/>
            <person name="Barrell B.G."/>
            <person name="Parkhill J."/>
            <person name="Hopwood D.A."/>
        </authorList>
    </citation>
    <scope>NUCLEOTIDE SEQUENCE [LARGE SCALE GENOMIC DNA]</scope>
    <source>
        <strain>ATCC BAA-471 / A3(2) / M145</strain>
    </source>
</reference>
<comment type="similarity">
    <text evidence="2">Belongs to the UPF0232 family.</text>
</comment>
<sequence length="190" mass="19772">MSADAPEPGPGQSPGERASGGPEPSGVDLARVALRAAREAARARGDAAQQKKQARRGGLRSGARADGRDPMALGSAINRLITERGWETPAAVGGVMGRWPEIVGADVAKHCVPERYDEDERVLVVRCDSTAWATNLRLLAPTLVARLNEDLGHGSVRMIKVLGPGGPGGPGRRYGPLRAPGSQGPGDTYG</sequence>
<keyword id="KW-1185">Reference proteome</keyword>
<evidence type="ECO:0000256" key="1">
    <source>
        <dbReference type="SAM" id="MobiDB-lite"/>
    </source>
</evidence>
<evidence type="ECO:0000305" key="2"/>
<protein>
    <recommendedName>
        <fullName>UPF0232 protein SCO3875</fullName>
    </recommendedName>
</protein>
<feature type="chain" id="PRO_0000211367" description="UPF0232 protein SCO3875">
    <location>
        <begin position="1"/>
        <end position="190"/>
    </location>
</feature>
<feature type="region of interest" description="Disordered" evidence="1">
    <location>
        <begin position="1"/>
        <end position="70"/>
    </location>
</feature>
<feature type="region of interest" description="Disordered" evidence="1">
    <location>
        <begin position="163"/>
        <end position="190"/>
    </location>
</feature>
<feature type="compositionally biased region" description="Low complexity" evidence="1">
    <location>
        <begin position="26"/>
        <end position="35"/>
    </location>
</feature>
<feature type="compositionally biased region" description="Basic and acidic residues" evidence="1">
    <location>
        <begin position="36"/>
        <end position="45"/>
    </location>
</feature>
<feature type="compositionally biased region" description="Gly residues" evidence="1">
    <location>
        <begin position="163"/>
        <end position="172"/>
    </location>
</feature>
<gene>
    <name type="ordered locus">SCO3875</name>
    <name type="ORF">SCH18.12c</name>
</gene>
<dbReference type="EMBL" id="L27063">
    <property type="protein sequence ID" value="AAA65214.1"/>
    <property type="molecule type" value="Genomic_DNA"/>
</dbReference>
<dbReference type="EMBL" id="AL939118">
    <property type="protein sequence ID" value="CAB92995.1"/>
    <property type="molecule type" value="Genomic_DNA"/>
</dbReference>
<dbReference type="PIR" id="T10968">
    <property type="entry name" value="T10968"/>
</dbReference>
<dbReference type="RefSeq" id="NP_628062.1">
    <property type="nucleotide sequence ID" value="NC_003888.3"/>
</dbReference>
<dbReference type="RefSeq" id="WP_003975057.1">
    <property type="nucleotide sequence ID" value="NZ_VNID01000003.1"/>
</dbReference>
<dbReference type="SMR" id="P35925"/>
<dbReference type="STRING" id="100226.gene:17761502"/>
<dbReference type="PaxDb" id="100226-SCO3875"/>
<dbReference type="KEGG" id="sco:SCO3875"/>
<dbReference type="PATRIC" id="fig|100226.15.peg.3948"/>
<dbReference type="eggNOG" id="COG5512">
    <property type="taxonomic scope" value="Bacteria"/>
</dbReference>
<dbReference type="HOGENOM" id="CLU_087206_0_2_11"/>
<dbReference type="InParanoid" id="P35925"/>
<dbReference type="OrthoDB" id="5516926at2"/>
<dbReference type="PhylomeDB" id="P35925"/>
<dbReference type="Proteomes" id="UP000001973">
    <property type="component" value="Chromosome"/>
</dbReference>
<dbReference type="HAMAP" id="MF_00630">
    <property type="entry name" value="UPF0232"/>
    <property type="match status" value="1"/>
</dbReference>
<dbReference type="InterPro" id="IPR007922">
    <property type="entry name" value="DciA-like"/>
</dbReference>
<dbReference type="InterPro" id="IPR023007">
    <property type="entry name" value="UPF0232_actinobac"/>
</dbReference>
<dbReference type="PANTHER" id="PTHR36456">
    <property type="entry name" value="UPF0232 PROTEIN SCO3875"/>
    <property type="match status" value="1"/>
</dbReference>
<dbReference type="PANTHER" id="PTHR36456:SF1">
    <property type="entry name" value="UPF0232 PROTEIN SCO3875"/>
    <property type="match status" value="1"/>
</dbReference>
<dbReference type="Pfam" id="PF05258">
    <property type="entry name" value="DciA"/>
    <property type="match status" value="1"/>
</dbReference>
<accession>P35925</accession>
<name>Y3875_STRCO</name>
<organism>
    <name type="scientific">Streptomyces coelicolor (strain ATCC BAA-471 / A3(2) / M145)</name>
    <dbReference type="NCBI Taxonomy" id="100226"/>
    <lineage>
        <taxon>Bacteria</taxon>
        <taxon>Bacillati</taxon>
        <taxon>Actinomycetota</taxon>
        <taxon>Actinomycetes</taxon>
        <taxon>Kitasatosporales</taxon>
        <taxon>Streptomycetaceae</taxon>
        <taxon>Streptomyces</taxon>
        <taxon>Streptomyces albidoflavus group</taxon>
    </lineage>
</organism>
<proteinExistence type="inferred from homology"/>